<comment type="function">
    <text evidence="1">Plays an important role in the cellular response to the nitrogen source. URE2 gene plays a major part in the repression of GLN1 and GDH2 genes by glutamine, and is required for the inactivation of glutamine synthetase. URE2 gene product may catalytically inactivate GLN3 in response to an increase in the intracellular concentration of glutamine (By similarity).</text>
</comment>
<comment type="subunit">
    <text evidence="1">Homodimer.</text>
</comment>
<comment type="similarity">
    <text evidence="3">Belongs to the GST superfamily.</text>
</comment>
<gene>
    <name type="primary">URE2</name>
</gene>
<evidence type="ECO:0000250" key="1"/>
<evidence type="ECO:0000256" key="2">
    <source>
        <dbReference type="SAM" id="MobiDB-lite"/>
    </source>
</evidence>
<evidence type="ECO:0000305" key="3"/>
<keyword id="KW-0534">Nitrate assimilation</keyword>
<name>URE2_KLUMA</name>
<organism>
    <name type="scientific">Kluyveromyces marxianus</name>
    <name type="common">Yeast</name>
    <name type="synonym">Candida kefyr</name>
    <dbReference type="NCBI Taxonomy" id="4911"/>
    <lineage>
        <taxon>Eukaryota</taxon>
        <taxon>Fungi</taxon>
        <taxon>Dikarya</taxon>
        <taxon>Ascomycota</taxon>
        <taxon>Saccharomycotina</taxon>
        <taxon>Saccharomycetes</taxon>
        <taxon>Saccharomycetales</taxon>
        <taxon>Saccharomycetaceae</taxon>
        <taxon>Kluyveromyces</taxon>
    </lineage>
</organism>
<protein>
    <recommendedName>
        <fullName>Protein URE2</fullName>
    </recommendedName>
</protein>
<proteinExistence type="inferred from homology"/>
<reference key="1">
    <citation type="journal article" date="2002" name="Proc. Natl. Acad. Sci. U.S.A.">
        <title>Conservation of a portion of the S. cerevisiae Ure2p prion domain that interacts with the full-length protein.</title>
        <authorList>
            <person name="Edskes H.K."/>
            <person name="Wickner R.B."/>
        </authorList>
    </citation>
    <scope>NUCLEOTIDE SEQUENCE [GENOMIC DNA] (ALLELES 1 AND 2)</scope>
    <source>
        <strain>B4425</strain>
    </source>
</reference>
<accession>Q8NJR4</accession>
<accession>Q8NJR3</accession>
<sequence>MQQDMHNGGTGNTISNLSSALRQVNLGNSNTTTDQSNIAIDFNQQQLMEEVNQNSMNAFNIQQQHQQQQENVQKQQEQQQQQLQQQQQQQQQQQQQQQQQQQQQQQLQQQQQLQQHHHHQQRQQHPNNNVQAGTSQQQMLFQGANSIDSSRITKFFQNQPMEGYTLFSHRSAPNGFKVAIVLSELNMHYNTIFLDFNLGEHRAPEFVAINPNARVPALIDHNMDNLSIWESGAIILHVVNKYYRETGTPLLWSDNLADQAQINAWLFFQTSGHAPMIGQALHFRYFHSQKVKSAVDRYTDEVRRVYGVVEMALAERREALIMDLDSENAAAYSAGTTPLSQSRFFDYPVWLVGDKITVADLSFVPWNNVVDRIGINIKVEFPEVYKWTKHMMRRPAVIKALRGE</sequence>
<feature type="chain" id="PRO_0000186009" description="Protein URE2">
    <location>
        <begin position="1"/>
        <end position="404"/>
    </location>
</feature>
<feature type="domain" description="GST N-terminal">
    <location>
        <begin position="162"/>
        <end position="246"/>
    </location>
</feature>
<feature type="domain" description="GST C-terminal">
    <location>
        <begin position="255"/>
        <end position="404"/>
    </location>
</feature>
<feature type="region of interest" description="Disordered" evidence="2">
    <location>
        <begin position="110"/>
        <end position="134"/>
    </location>
</feature>
<feature type="sequence variant" description="In allele 2.">
    <original>N</original>
    <variation>S</variation>
    <location>
        <position position="25"/>
    </location>
</feature>
<feature type="sequence variant" description="In allele 2.">
    <location>
        <begin position="77"/>
        <end position="81"/>
    </location>
</feature>
<feature type="sequence variant" description="In allele 2.">
    <location>
        <position position="107"/>
    </location>
</feature>
<feature type="sequence variant" description="In allele 2.">
    <original>P</original>
    <variation>A</variation>
    <location>
        <position position="126"/>
    </location>
</feature>
<dbReference type="EMBL" id="AF525168">
    <property type="protein sequence ID" value="AAM91941.1"/>
    <property type="molecule type" value="Genomic_DNA"/>
</dbReference>
<dbReference type="EMBL" id="AF525169">
    <property type="protein sequence ID" value="AAM91942.1"/>
    <property type="molecule type" value="Genomic_DNA"/>
</dbReference>
<dbReference type="SMR" id="Q8NJR4"/>
<dbReference type="VEuPathDB" id="FungiDB:KLMA_50619"/>
<dbReference type="GO" id="GO:0003714">
    <property type="term" value="F:transcription corepressor activity"/>
    <property type="evidence" value="ECO:0007669"/>
    <property type="project" value="InterPro"/>
</dbReference>
<dbReference type="GO" id="GO:0042128">
    <property type="term" value="P:nitrate assimilation"/>
    <property type="evidence" value="ECO:0007669"/>
    <property type="project" value="UniProtKB-KW"/>
</dbReference>
<dbReference type="GO" id="GO:0006808">
    <property type="term" value="P:regulation of nitrogen utilization"/>
    <property type="evidence" value="ECO:0007669"/>
    <property type="project" value="InterPro"/>
</dbReference>
<dbReference type="CDD" id="cd10293">
    <property type="entry name" value="GST_C_Ure2p"/>
    <property type="match status" value="1"/>
</dbReference>
<dbReference type="CDD" id="cd03048">
    <property type="entry name" value="GST_N_Ure2p_like"/>
    <property type="match status" value="1"/>
</dbReference>
<dbReference type="FunFam" id="1.20.1050.10:FF:000034">
    <property type="entry name" value="Transcriptional regulator URE2"/>
    <property type="match status" value="1"/>
</dbReference>
<dbReference type="Gene3D" id="1.20.1050.10">
    <property type="match status" value="1"/>
</dbReference>
<dbReference type="Gene3D" id="3.40.30.10">
    <property type="entry name" value="Glutaredoxin"/>
    <property type="match status" value="1"/>
</dbReference>
<dbReference type="InterPro" id="IPR010987">
    <property type="entry name" value="Glutathione-S-Trfase_C-like"/>
</dbReference>
<dbReference type="InterPro" id="IPR036282">
    <property type="entry name" value="Glutathione-S-Trfase_C_sf"/>
</dbReference>
<dbReference type="InterPro" id="IPR040079">
    <property type="entry name" value="Glutathione_S-Trfase"/>
</dbReference>
<dbReference type="InterPro" id="IPR004045">
    <property type="entry name" value="Glutathione_S-Trfase_N"/>
</dbReference>
<dbReference type="InterPro" id="IPR004046">
    <property type="entry name" value="GST_C"/>
</dbReference>
<dbReference type="InterPro" id="IPR036249">
    <property type="entry name" value="Thioredoxin-like_sf"/>
</dbReference>
<dbReference type="InterPro" id="IPR017298">
    <property type="entry name" value="Ure2"/>
</dbReference>
<dbReference type="PANTHER" id="PTHR44051">
    <property type="entry name" value="GLUTATHIONE S-TRANSFERASE-RELATED"/>
    <property type="match status" value="1"/>
</dbReference>
<dbReference type="PANTHER" id="PTHR44051:SF3">
    <property type="entry name" value="TRANSCRIPTIONAL REGULATOR URE2"/>
    <property type="match status" value="1"/>
</dbReference>
<dbReference type="Pfam" id="PF00043">
    <property type="entry name" value="GST_C"/>
    <property type="match status" value="1"/>
</dbReference>
<dbReference type="Pfam" id="PF02798">
    <property type="entry name" value="GST_N"/>
    <property type="match status" value="1"/>
</dbReference>
<dbReference type="PIRSF" id="PIRSF037861">
    <property type="entry name" value="Prion_URE2"/>
    <property type="match status" value="1"/>
</dbReference>
<dbReference type="SFLD" id="SFLDS00019">
    <property type="entry name" value="Glutathione_Transferase_(cytos"/>
    <property type="match status" value="1"/>
</dbReference>
<dbReference type="SFLD" id="SFLDG00358">
    <property type="entry name" value="Main_(cytGST)"/>
    <property type="match status" value="1"/>
</dbReference>
<dbReference type="SUPFAM" id="SSF47616">
    <property type="entry name" value="GST C-terminal domain-like"/>
    <property type="match status" value="1"/>
</dbReference>
<dbReference type="SUPFAM" id="SSF52833">
    <property type="entry name" value="Thioredoxin-like"/>
    <property type="match status" value="1"/>
</dbReference>
<dbReference type="PROSITE" id="PS50405">
    <property type="entry name" value="GST_CTER"/>
    <property type="match status" value="1"/>
</dbReference>
<dbReference type="PROSITE" id="PS50404">
    <property type="entry name" value="GST_NTER"/>
    <property type="match status" value="1"/>
</dbReference>